<keyword id="KW-0030">Aminoacyl-tRNA synthetase</keyword>
<keyword id="KW-0067">ATP-binding</keyword>
<keyword id="KW-0963">Cytoplasm</keyword>
<keyword id="KW-0436">Ligase</keyword>
<keyword id="KW-0547">Nucleotide-binding</keyword>
<keyword id="KW-0648">Protein biosynthesis</keyword>
<keyword id="KW-1185">Reference proteome</keyword>
<organism>
    <name type="scientific">Corynebacterium kroppenstedtii (strain DSM 44385 / JCM 11950 / CIP 105744 / CCUG 35717)</name>
    <dbReference type="NCBI Taxonomy" id="645127"/>
    <lineage>
        <taxon>Bacteria</taxon>
        <taxon>Bacillati</taxon>
        <taxon>Actinomycetota</taxon>
        <taxon>Actinomycetes</taxon>
        <taxon>Mycobacteriales</taxon>
        <taxon>Corynebacteriaceae</taxon>
        <taxon>Corynebacterium</taxon>
    </lineage>
</organism>
<proteinExistence type="inferred from homology"/>
<sequence length="597" mass="65981">MHRTHLAGELRSHHVGQTVTLSGWVARRRDHGGVIFIDLRDRSGLAQVVFRDSDVAAQAHHLRSEYCIRVTGVVDARPEGSENPNLDSGAIELNVNELTILNSSEALPFQIDDQSSSGEVGEETRLKYRYLDLRRKTQHDALVLRSNVNQAARSVLLKHDFHEIETPTLTRSTPEGARDFLVPARLRPGSFYALPQSPQLFKQLLMVGGMERYFQIARCYRDEDFRADRQPEFTQLDVEMSFVDQDDVISVAEEILTAIWKEIGYDIPTPIPRMTYADAMKYYGSDKPDLRFDIKIVECTEFFANTTFRVFQNPYVGAIVMEDGASQPRRQLDAWQDWAKQRGAKGLAYILVGDDGQLSGPVAKNITDAEREGIADHVGAKPGDCIFFAAGDAKSSRALLGAARGEVARKLGLIKEGDWAFTWVVDAPLFEPAADATAEGDVALGHSAWTAVHHAFTSPKPECMDSFDKDPGSALSYAYDIVCNGNEIGGGSIRIHRSDVQQRVFNVMGISDEEAQEKFGFLLEAMKFGAPPHGGIAFGWDRIVSLLGGFESIRDVIAFPKSGGGVDPLTDAPAPITPEQRKESGIDAKPKKKETKN</sequence>
<dbReference type="EC" id="6.1.1.23" evidence="1"/>
<dbReference type="EMBL" id="CP001620">
    <property type="protein sequence ID" value="ACR17767.1"/>
    <property type="molecule type" value="Genomic_DNA"/>
</dbReference>
<dbReference type="RefSeq" id="WP_012731654.1">
    <property type="nucleotide sequence ID" value="NC_012704.1"/>
</dbReference>
<dbReference type="SMR" id="C4LIW2"/>
<dbReference type="STRING" id="645127.ckrop_1014"/>
<dbReference type="KEGG" id="ckp:ckrop_1014"/>
<dbReference type="eggNOG" id="COG0173">
    <property type="taxonomic scope" value="Bacteria"/>
</dbReference>
<dbReference type="HOGENOM" id="CLU_014330_3_2_11"/>
<dbReference type="OrthoDB" id="9802326at2"/>
<dbReference type="Proteomes" id="UP000001473">
    <property type="component" value="Chromosome"/>
</dbReference>
<dbReference type="GO" id="GO:0005737">
    <property type="term" value="C:cytoplasm"/>
    <property type="evidence" value="ECO:0007669"/>
    <property type="project" value="UniProtKB-SubCell"/>
</dbReference>
<dbReference type="GO" id="GO:0004815">
    <property type="term" value="F:aspartate-tRNA ligase activity"/>
    <property type="evidence" value="ECO:0007669"/>
    <property type="project" value="UniProtKB-UniRule"/>
</dbReference>
<dbReference type="GO" id="GO:0050560">
    <property type="term" value="F:aspartate-tRNA(Asn) ligase activity"/>
    <property type="evidence" value="ECO:0007669"/>
    <property type="project" value="UniProtKB-EC"/>
</dbReference>
<dbReference type="GO" id="GO:0005524">
    <property type="term" value="F:ATP binding"/>
    <property type="evidence" value="ECO:0007669"/>
    <property type="project" value="UniProtKB-UniRule"/>
</dbReference>
<dbReference type="GO" id="GO:0003676">
    <property type="term" value="F:nucleic acid binding"/>
    <property type="evidence" value="ECO:0007669"/>
    <property type="project" value="InterPro"/>
</dbReference>
<dbReference type="GO" id="GO:0006422">
    <property type="term" value="P:aspartyl-tRNA aminoacylation"/>
    <property type="evidence" value="ECO:0007669"/>
    <property type="project" value="UniProtKB-UniRule"/>
</dbReference>
<dbReference type="CDD" id="cd00777">
    <property type="entry name" value="AspRS_core"/>
    <property type="match status" value="1"/>
</dbReference>
<dbReference type="CDD" id="cd04317">
    <property type="entry name" value="EcAspRS_like_N"/>
    <property type="match status" value="1"/>
</dbReference>
<dbReference type="Gene3D" id="3.30.930.10">
    <property type="entry name" value="Bira Bifunctional Protein, Domain 2"/>
    <property type="match status" value="1"/>
</dbReference>
<dbReference type="Gene3D" id="3.30.1360.30">
    <property type="entry name" value="GAD-like domain"/>
    <property type="match status" value="1"/>
</dbReference>
<dbReference type="Gene3D" id="2.40.50.140">
    <property type="entry name" value="Nucleic acid-binding proteins"/>
    <property type="match status" value="1"/>
</dbReference>
<dbReference type="HAMAP" id="MF_00044">
    <property type="entry name" value="Asp_tRNA_synth_type1"/>
    <property type="match status" value="1"/>
</dbReference>
<dbReference type="InterPro" id="IPR004364">
    <property type="entry name" value="Aa-tRNA-synt_II"/>
</dbReference>
<dbReference type="InterPro" id="IPR006195">
    <property type="entry name" value="aa-tRNA-synth_II"/>
</dbReference>
<dbReference type="InterPro" id="IPR045864">
    <property type="entry name" value="aa-tRNA-synth_II/BPL/LPL"/>
</dbReference>
<dbReference type="InterPro" id="IPR004524">
    <property type="entry name" value="Asp-tRNA-ligase_1"/>
</dbReference>
<dbReference type="InterPro" id="IPR047089">
    <property type="entry name" value="Asp-tRNA-ligase_1_N"/>
</dbReference>
<dbReference type="InterPro" id="IPR002312">
    <property type="entry name" value="Asp/Asn-tRNA-synth_IIb"/>
</dbReference>
<dbReference type="InterPro" id="IPR047090">
    <property type="entry name" value="AspRS_core"/>
</dbReference>
<dbReference type="InterPro" id="IPR004115">
    <property type="entry name" value="GAD-like_sf"/>
</dbReference>
<dbReference type="InterPro" id="IPR029351">
    <property type="entry name" value="GAD_dom"/>
</dbReference>
<dbReference type="InterPro" id="IPR012340">
    <property type="entry name" value="NA-bd_OB-fold"/>
</dbReference>
<dbReference type="InterPro" id="IPR004365">
    <property type="entry name" value="NA-bd_OB_tRNA"/>
</dbReference>
<dbReference type="NCBIfam" id="TIGR00459">
    <property type="entry name" value="aspS_bact"/>
    <property type="match status" value="1"/>
</dbReference>
<dbReference type="NCBIfam" id="NF001750">
    <property type="entry name" value="PRK00476.1"/>
    <property type="match status" value="1"/>
</dbReference>
<dbReference type="PANTHER" id="PTHR22594:SF5">
    <property type="entry name" value="ASPARTATE--TRNA LIGASE, MITOCHONDRIAL"/>
    <property type="match status" value="1"/>
</dbReference>
<dbReference type="PANTHER" id="PTHR22594">
    <property type="entry name" value="ASPARTYL/LYSYL-TRNA SYNTHETASE"/>
    <property type="match status" value="1"/>
</dbReference>
<dbReference type="Pfam" id="PF02938">
    <property type="entry name" value="GAD"/>
    <property type="match status" value="1"/>
</dbReference>
<dbReference type="Pfam" id="PF00152">
    <property type="entry name" value="tRNA-synt_2"/>
    <property type="match status" value="1"/>
</dbReference>
<dbReference type="Pfam" id="PF01336">
    <property type="entry name" value="tRNA_anti-codon"/>
    <property type="match status" value="1"/>
</dbReference>
<dbReference type="PRINTS" id="PR01042">
    <property type="entry name" value="TRNASYNTHASP"/>
</dbReference>
<dbReference type="SUPFAM" id="SSF55681">
    <property type="entry name" value="Class II aaRS and biotin synthetases"/>
    <property type="match status" value="1"/>
</dbReference>
<dbReference type="SUPFAM" id="SSF55261">
    <property type="entry name" value="GAD domain-like"/>
    <property type="match status" value="1"/>
</dbReference>
<dbReference type="SUPFAM" id="SSF50249">
    <property type="entry name" value="Nucleic acid-binding proteins"/>
    <property type="match status" value="1"/>
</dbReference>
<dbReference type="PROSITE" id="PS50862">
    <property type="entry name" value="AA_TRNA_LIGASE_II"/>
    <property type="match status" value="1"/>
</dbReference>
<accession>C4LIW2</accession>
<gene>
    <name evidence="1" type="primary">aspS</name>
    <name type="ordered locus">ckrop_1014</name>
</gene>
<comment type="function">
    <text evidence="1">Aspartyl-tRNA synthetase with relaxed tRNA specificity since it is able to aspartylate not only its cognate tRNA(Asp) but also tRNA(Asn). Reaction proceeds in two steps: L-aspartate is first activated by ATP to form Asp-AMP and then transferred to the acceptor end of tRNA(Asp/Asn).</text>
</comment>
<comment type="catalytic activity">
    <reaction evidence="1">
        <text>tRNA(Asx) + L-aspartate + ATP = L-aspartyl-tRNA(Asx) + AMP + diphosphate</text>
        <dbReference type="Rhea" id="RHEA:18349"/>
        <dbReference type="Rhea" id="RHEA-COMP:9710"/>
        <dbReference type="Rhea" id="RHEA-COMP:9711"/>
        <dbReference type="ChEBI" id="CHEBI:29991"/>
        <dbReference type="ChEBI" id="CHEBI:30616"/>
        <dbReference type="ChEBI" id="CHEBI:33019"/>
        <dbReference type="ChEBI" id="CHEBI:78442"/>
        <dbReference type="ChEBI" id="CHEBI:78516"/>
        <dbReference type="ChEBI" id="CHEBI:456215"/>
        <dbReference type="EC" id="6.1.1.23"/>
    </reaction>
</comment>
<comment type="subunit">
    <text evidence="1">Homodimer.</text>
</comment>
<comment type="subcellular location">
    <subcellularLocation>
        <location evidence="1">Cytoplasm</location>
    </subcellularLocation>
</comment>
<comment type="similarity">
    <text evidence="1">Belongs to the class-II aminoacyl-tRNA synthetase family. Type 1 subfamily.</text>
</comment>
<name>SYDND_CORK4</name>
<evidence type="ECO:0000255" key="1">
    <source>
        <dbReference type="HAMAP-Rule" id="MF_00044"/>
    </source>
</evidence>
<evidence type="ECO:0000256" key="2">
    <source>
        <dbReference type="SAM" id="MobiDB-lite"/>
    </source>
</evidence>
<feature type="chain" id="PRO_1000202152" description="Aspartate--tRNA(Asp/Asn) ligase">
    <location>
        <begin position="1"/>
        <end position="597"/>
    </location>
</feature>
<feature type="region of interest" description="Aspartate" evidence="1">
    <location>
        <begin position="199"/>
        <end position="202"/>
    </location>
</feature>
<feature type="region of interest" description="Disordered" evidence="2">
    <location>
        <begin position="562"/>
        <end position="597"/>
    </location>
</feature>
<feature type="compositionally biased region" description="Basic and acidic residues" evidence="2">
    <location>
        <begin position="579"/>
        <end position="589"/>
    </location>
</feature>
<feature type="binding site" evidence="1">
    <location>
        <position position="175"/>
    </location>
    <ligand>
        <name>L-aspartate</name>
        <dbReference type="ChEBI" id="CHEBI:29991"/>
    </ligand>
</feature>
<feature type="binding site" evidence="1">
    <location>
        <begin position="221"/>
        <end position="223"/>
    </location>
    <ligand>
        <name>ATP</name>
        <dbReference type="ChEBI" id="CHEBI:30616"/>
    </ligand>
</feature>
<feature type="binding site" evidence="1">
    <location>
        <position position="221"/>
    </location>
    <ligand>
        <name>L-aspartate</name>
        <dbReference type="ChEBI" id="CHEBI:29991"/>
    </ligand>
</feature>
<feature type="binding site" evidence="1">
    <location>
        <position position="230"/>
    </location>
    <ligand>
        <name>ATP</name>
        <dbReference type="ChEBI" id="CHEBI:30616"/>
    </ligand>
</feature>
<feature type="binding site" evidence="1">
    <location>
        <position position="453"/>
    </location>
    <ligand>
        <name>L-aspartate</name>
        <dbReference type="ChEBI" id="CHEBI:29991"/>
    </ligand>
</feature>
<feature type="binding site" evidence="1">
    <location>
        <position position="487"/>
    </location>
    <ligand>
        <name>ATP</name>
        <dbReference type="ChEBI" id="CHEBI:30616"/>
    </ligand>
</feature>
<feature type="binding site" evidence="1">
    <location>
        <position position="494"/>
    </location>
    <ligand>
        <name>L-aspartate</name>
        <dbReference type="ChEBI" id="CHEBI:29991"/>
    </ligand>
</feature>
<feature type="binding site" evidence="1">
    <location>
        <begin position="539"/>
        <end position="542"/>
    </location>
    <ligand>
        <name>ATP</name>
        <dbReference type="ChEBI" id="CHEBI:30616"/>
    </ligand>
</feature>
<feature type="site" description="Important for tRNA non-discrimination" evidence="1">
    <location>
        <position position="31"/>
    </location>
</feature>
<feature type="site" description="Important for tRNA non-discrimination" evidence="1">
    <location>
        <position position="80"/>
    </location>
</feature>
<protein>
    <recommendedName>
        <fullName evidence="1">Aspartate--tRNA(Asp/Asn) ligase</fullName>
        <ecNumber evidence="1">6.1.1.23</ecNumber>
    </recommendedName>
    <alternativeName>
        <fullName evidence="1">Aspartyl-tRNA synthetase</fullName>
        <shortName evidence="1">AspRS</shortName>
    </alternativeName>
    <alternativeName>
        <fullName evidence="1">Non-discriminating aspartyl-tRNA synthetase</fullName>
        <shortName evidence="1">ND-AspRS</shortName>
    </alternativeName>
</protein>
<reference key="1">
    <citation type="journal article" date="2008" name="J. Biotechnol.">
        <title>Ultrafast pyrosequencing of Corynebacterium kroppenstedtii DSM44385 revealed insights into the physiology of a lipophilic corynebacterium that lacks mycolic acids.</title>
        <authorList>
            <person name="Tauch A."/>
            <person name="Schneider J."/>
            <person name="Szczepanowski R."/>
            <person name="Tilker A."/>
            <person name="Viehoever P."/>
            <person name="Gartemann K.-H."/>
            <person name="Arnold W."/>
            <person name="Blom J."/>
            <person name="Brinkrolf K."/>
            <person name="Brune I."/>
            <person name="Goetker S."/>
            <person name="Weisshaar B."/>
            <person name="Goesmann A."/>
            <person name="Droege M."/>
            <person name="Puehler A."/>
        </authorList>
    </citation>
    <scope>NUCLEOTIDE SEQUENCE [LARGE SCALE GENOMIC DNA]</scope>
    <source>
        <strain>DSM 44385 / JCM 11950 / CIP 105744 / CCUG 35717</strain>
    </source>
</reference>